<protein>
    <recommendedName>
        <fullName>Integrin beta-2</fullName>
    </recommendedName>
    <alternativeName>
        <fullName>Cell surface adhesion glycoproteins LFA-1/CR3/p150,95 subunit beta</fullName>
    </alternativeName>
    <alternativeName>
        <fullName>Complement receptor C3 subunit beta</fullName>
    </alternativeName>
    <cdAntigenName>CD18</cdAntigenName>
</protein>
<reference key="1">
    <citation type="journal article" date="1992" name="Gene">
        <title>Sequence of the bovine CD18-encoding cDNA: comparison with the human and murine glycoproteins.</title>
        <authorList>
            <person name="Shuster D.E."/>
            <person name="Bosworth B.T."/>
            <person name="Kehrli M.E. Jr."/>
        </authorList>
    </citation>
    <scope>NUCLEOTIDE SEQUENCE [MRNA]</scope>
</reference>
<reference key="2">
    <citation type="journal article" date="1992" name="Proc. Natl. Acad. Sci. U.S.A.">
        <title>Identification and prevalence of a genetic defect that causes leukocyte adhesion deficiency in Holstein cattle.</title>
        <authorList>
            <person name="Shuster D.E."/>
            <person name="Kehrli M.E. Jr."/>
            <person name="Ackermann M.R."/>
            <person name="Gilbert R.O."/>
        </authorList>
    </citation>
    <scope>VARIANT LAD GLY-128</scope>
    <scope>DISEASE</scope>
</reference>
<gene>
    <name type="primary">ITGB2</name>
    <name type="synonym">CD18</name>
</gene>
<name>ITB2_BOVIN</name>
<organism>
    <name type="scientific">Bos taurus</name>
    <name type="common">Bovine</name>
    <dbReference type="NCBI Taxonomy" id="9913"/>
    <lineage>
        <taxon>Eukaryota</taxon>
        <taxon>Metazoa</taxon>
        <taxon>Chordata</taxon>
        <taxon>Craniata</taxon>
        <taxon>Vertebrata</taxon>
        <taxon>Euteleostomi</taxon>
        <taxon>Mammalia</taxon>
        <taxon>Eutheria</taxon>
        <taxon>Laurasiatheria</taxon>
        <taxon>Artiodactyla</taxon>
        <taxon>Ruminantia</taxon>
        <taxon>Pecora</taxon>
        <taxon>Bovidae</taxon>
        <taxon>Bovinae</taxon>
        <taxon>Bos</taxon>
    </lineage>
</organism>
<feature type="signal peptide" evidence="1">
    <location>
        <begin position="1"/>
        <end position="22"/>
    </location>
</feature>
<feature type="chain" id="PRO_0000016340" description="Integrin beta-2">
    <location>
        <begin position="23"/>
        <end position="769"/>
    </location>
</feature>
<feature type="topological domain" description="Extracellular" evidence="4">
    <location>
        <begin position="23"/>
        <end position="700"/>
    </location>
</feature>
<feature type="transmembrane region" description="Helical" evidence="4">
    <location>
        <begin position="701"/>
        <end position="723"/>
    </location>
</feature>
<feature type="topological domain" description="Cytoplasmic" evidence="4">
    <location>
        <begin position="724"/>
        <end position="769"/>
    </location>
</feature>
<feature type="domain" description="PSI" evidence="4">
    <location>
        <begin position="24"/>
        <end position="74"/>
    </location>
</feature>
<feature type="domain" description="VWFA" evidence="2">
    <location>
        <begin position="124"/>
        <end position="363"/>
    </location>
</feature>
<feature type="domain" description="I-EGF 1" evidence="5">
    <location>
        <begin position="449"/>
        <end position="482"/>
    </location>
</feature>
<feature type="domain" description="I-EGF 2" evidence="5">
    <location>
        <begin position="483"/>
        <end position="535"/>
    </location>
</feature>
<feature type="domain" description="I-EGF 3" evidence="5">
    <location>
        <begin position="536"/>
        <end position="574"/>
    </location>
</feature>
<feature type="domain" description="I-EGF 4" evidence="5">
    <location>
        <begin position="575"/>
        <end position="613"/>
    </location>
</feature>
<feature type="short sequence motif" description="Cell attachment site" evidence="4">
    <location>
        <begin position="397"/>
        <end position="399"/>
    </location>
</feature>
<feature type="binding site" description="in MIDAS binding site" evidence="3">
    <location>
        <position position="136"/>
    </location>
    <ligand>
        <name>Mg(2+)</name>
        <dbReference type="ChEBI" id="CHEBI:18420"/>
    </ligand>
</feature>
<feature type="binding site" description="in ADMIDAS binding site" evidence="3">
    <location>
        <position position="138"/>
    </location>
    <ligand>
        <name>Ca(2+)</name>
        <dbReference type="ChEBI" id="CHEBI:29108"/>
        <label>1</label>
    </ligand>
</feature>
<feature type="binding site" description="in MIDAS binding site" evidence="3">
    <location>
        <position position="138"/>
    </location>
    <ligand>
        <name>Mg(2+)</name>
        <dbReference type="ChEBI" id="CHEBI:18420"/>
    </ligand>
</feature>
<feature type="binding site" description="in ADMIDAS binding site" evidence="3">
    <location>
        <position position="141"/>
    </location>
    <ligand>
        <name>Ca(2+)</name>
        <dbReference type="ChEBI" id="CHEBI:29108"/>
        <label>1</label>
    </ligand>
</feature>
<feature type="binding site" description="in ADMIDAS binding site" evidence="3">
    <location>
        <position position="142"/>
    </location>
    <ligand>
        <name>Ca(2+)</name>
        <dbReference type="ChEBI" id="CHEBI:29108"/>
        <label>1</label>
    </ligand>
</feature>
<feature type="binding site" description="in LIMBS binding site" evidence="3">
    <location>
        <position position="173"/>
    </location>
    <ligand>
        <name>Ca(2+)</name>
        <dbReference type="ChEBI" id="CHEBI:29108"/>
        <label>2</label>
    </ligand>
</feature>
<feature type="binding site" description="in LIMBS binding site" evidence="3">
    <location>
        <position position="229"/>
    </location>
    <ligand>
        <name>Ca(2+)</name>
        <dbReference type="ChEBI" id="CHEBI:29108"/>
        <label>2</label>
    </ligand>
</feature>
<feature type="binding site" description="in LIMBS binding site" evidence="3">
    <location>
        <position position="231"/>
    </location>
    <ligand>
        <name>Ca(2+)</name>
        <dbReference type="ChEBI" id="CHEBI:29108"/>
        <label>2</label>
    </ligand>
</feature>
<feature type="binding site" description="in LIMBS binding site" evidence="3">
    <location>
        <position position="233"/>
    </location>
    <ligand>
        <name>Ca(2+)</name>
        <dbReference type="ChEBI" id="CHEBI:29108"/>
        <label>2</label>
    </ligand>
</feature>
<feature type="binding site" description="in LIMBS binding site" evidence="3">
    <location>
        <position position="234"/>
    </location>
    <ligand>
        <name>Ca(2+)</name>
        <dbReference type="ChEBI" id="CHEBI:29108"/>
        <label>2</label>
    </ligand>
</feature>
<feature type="binding site" description="in MIDAS binding site" evidence="3">
    <location>
        <position position="234"/>
    </location>
    <ligand>
        <name>Mg(2+)</name>
        <dbReference type="ChEBI" id="CHEBI:18420"/>
    </ligand>
</feature>
<feature type="binding site" description="in ADMIDAS binding site and liganded-open conformation" evidence="3">
    <location>
        <position position="264"/>
    </location>
    <ligand>
        <name>Ca(2+)</name>
        <dbReference type="ChEBI" id="CHEBI:29108"/>
        <label>1</label>
    </ligand>
</feature>
<feature type="binding site" description="in ADMIDAS binding site and unliganded-closed conformation" evidence="3">
    <location>
        <position position="347"/>
    </location>
    <ligand>
        <name>Ca(2+)</name>
        <dbReference type="ChEBI" id="CHEBI:29108"/>
        <label>1</label>
    </ligand>
</feature>
<feature type="modified residue" description="Pyrrolidone carboxylic acid" evidence="3">
    <location>
        <position position="23"/>
    </location>
</feature>
<feature type="modified residue" description="Phosphoserine" evidence="3">
    <location>
        <position position="745"/>
    </location>
</feature>
<feature type="modified residue" description="Phosphoserine" evidence="3">
    <location>
        <position position="756"/>
    </location>
</feature>
<feature type="modified residue" description="Phosphothreonine" evidence="3">
    <location>
        <position position="758"/>
    </location>
</feature>
<feature type="modified residue" description="Phosphothreonine" evidence="3">
    <location>
        <position position="760"/>
    </location>
</feature>
<feature type="glycosylation site" description="N-linked (GlcNAc...) asparagine" evidence="4">
    <location>
        <position position="50"/>
    </location>
</feature>
<feature type="glycosylation site" description="N-linked (GlcNAc...) asparagine" evidence="4">
    <location>
        <position position="116"/>
    </location>
</feature>
<feature type="glycosylation site" description="N-linked (GlcNAc...) asparagine" evidence="4">
    <location>
        <position position="254"/>
    </location>
</feature>
<feature type="glycosylation site" description="N-linked (GlcNAc...) asparagine" evidence="4">
    <location>
        <position position="501"/>
    </location>
</feature>
<feature type="glycosylation site" description="N-linked (GlcNAc...) asparagine" evidence="4">
    <location>
        <position position="642"/>
    </location>
</feature>
<feature type="disulfide bond" evidence="3">
    <location>
        <begin position="25"/>
        <end position="43"/>
    </location>
</feature>
<feature type="disulfide bond" evidence="3">
    <location>
        <begin position="33"/>
        <end position="447"/>
    </location>
</feature>
<feature type="disulfide bond" evidence="3">
    <location>
        <begin position="36"/>
        <end position="62"/>
    </location>
</feature>
<feature type="disulfide bond" evidence="3">
    <location>
        <begin position="46"/>
        <end position="73"/>
    </location>
</feature>
<feature type="disulfide bond" evidence="3">
    <location>
        <begin position="191"/>
        <end position="198"/>
    </location>
</feature>
<feature type="disulfide bond" evidence="3">
    <location>
        <begin position="246"/>
        <end position="286"/>
    </location>
</feature>
<feature type="disulfide bond" evidence="3">
    <location>
        <begin position="386"/>
        <end position="400"/>
    </location>
</feature>
<feature type="disulfide bond" evidence="3">
    <location>
        <begin position="420"/>
        <end position="445"/>
    </location>
</feature>
<feature type="disulfide bond" evidence="5">
    <location>
        <begin position="449"/>
        <end position="467"/>
    </location>
</feature>
<feature type="disulfide bond" evidence="5">
    <location>
        <begin position="459"/>
        <end position="470"/>
    </location>
</feature>
<feature type="disulfide bond" evidence="5">
    <location>
        <begin position="472"/>
        <end position="481"/>
    </location>
</feature>
<feature type="disulfide bond" evidence="5">
    <location>
        <begin position="483"/>
        <end position="514"/>
    </location>
</feature>
<feature type="disulfide bond" evidence="5">
    <location>
        <begin position="497"/>
        <end position="512"/>
    </location>
</feature>
<feature type="disulfide bond" evidence="5">
    <location>
        <begin position="506"/>
        <end position="517"/>
    </location>
</feature>
<feature type="disulfide bond" evidence="5">
    <location>
        <begin position="519"/>
        <end position="534"/>
    </location>
</feature>
<feature type="disulfide bond" evidence="5">
    <location>
        <begin position="536"/>
        <end position="559"/>
    </location>
</feature>
<feature type="disulfide bond" evidence="5">
    <location>
        <begin position="541"/>
        <end position="557"/>
    </location>
</feature>
<feature type="disulfide bond" evidence="5">
    <location>
        <begin position="549"/>
        <end position="562"/>
    </location>
</feature>
<feature type="disulfide bond" evidence="5">
    <location>
        <begin position="564"/>
        <end position="573"/>
    </location>
</feature>
<feature type="disulfide bond" evidence="5">
    <location>
        <begin position="575"/>
        <end position="598"/>
    </location>
</feature>
<feature type="disulfide bond" evidence="5">
    <location>
        <begin position="582"/>
        <end position="596"/>
    </location>
</feature>
<feature type="disulfide bond" evidence="5">
    <location>
        <begin position="590"/>
        <end position="601"/>
    </location>
</feature>
<feature type="disulfide bond" evidence="5">
    <location>
        <begin position="603"/>
        <end position="612"/>
    </location>
</feature>
<feature type="disulfide bond" evidence="3">
    <location>
        <begin position="615"/>
        <end position="618"/>
    </location>
</feature>
<feature type="disulfide bond" evidence="3">
    <location>
        <begin position="622"/>
        <end position="662"/>
    </location>
</feature>
<feature type="disulfide bond" evidence="3">
    <location>
        <begin position="628"/>
        <end position="647"/>
    </location>
</feature>
<feature type="disulfide bond" evidence="3">
    <location>
        <begin position="631"/>
        <end position="643"/>
    </location>
</feature>
<feature type="disulfide bond" evidence="3">
    <location>
        <begin position="670"/>
        <end position="695"/>
    </location>
</feature>
<feature type="sequence variant" description="In LAD." evidence="6">
    <original>D</original>
    <variation>G</variation>
    <location>
        <position position="128"/>
    </location>
</feature>
<comment type="function">
    <text evidence="3">Integrin ITGAL/ITGB2 is a receptor for ICAM1, ICAM2, ICAM3 and ICAM4. Integrin ITGAL/ITGB2 is also a receptor for the secreted form of ubiquitin-like protein ISG15; the interaction is mediated by ITGAL. Integrins ITGAM/ITGB2 and ITGAX/ITGB2 are receptors for the iC3b fragment of the third complement component and for fibrinogen. Integrin ITGAX/ITGB2 recognizes the sequence G-P-R in fibrinogen alpha-chain. Integrin ITGAM/ITGB2 recognizes P1 and P2 peptides of fibrinogen gamma chain. Integrin ITGAM/ITGB2 is also a receptor for factor X. Integrin ITGAD/ITGB2 is a receptor for ICAM3 and VCAM1. Contributes to natural killer cell cytotoxicity. Involved in leukocyte adhesion and transmigration of leukocytes including T-cells and neutrophils. Triggers neutrophil transmigration during lung injury through PTK2B/PYK2-mediated activation. Integrin ITGAL/ITGB2 in association with ICAM3, contributes to apoptotic neutrophil phagocytosis by macrophages.</text>
</comment>
<comment type="subunit">
    <text evidence="3">Heterodimer of an alpha and a beta subunit. The ITGB2 beta subunit associates with the ITGAL, ITGAM, ITGAX or ITGAD alpha subunits. Found in a complex with CD177 and ITGAM/CD11b. Interacts with FGR. Interacts with COPS5 and RANBP9. Interacts with FLNA (via filamin repeats 4, 9, 12, 17, 19, 21, and 23). Interacts with THBD.</text>
</comment>
<comment type="interaction">
    <interactant intactId="EBI-11509482">
        <id>P32592</id>
    </interactant>
    <interactant intactId="EBI-11580242">
        <id>Q7BHI8</id>
        <label>lktA</label>
    </interactant>
    <organismsDiffer>true</organismsDiffer>
    <experiments>3</experiments>
</comment>
<comment type="subcellular location">
    <subcellularLocation>
        <location evidence="3">Cell membrane</location>
        <topology evidence="3">Single-pass type I membrane protein</topology>
    </subcellularLocation>
    <subcellularLocation>
        <location evidence="3">Membrane raft</location>
        <topology evidence="3">Single-pass type I membrane protein</topology>
    </subcellularLocation>
</comment>
<comment type="domain">
    <text evidence="3">The VWFA domain (or beta I domain) contains three cation-binding sites: the ligand-associated metal ion-binding site (LIMBS or SyMBS), the metal ion-dependent adhesion site (MIDAS), and the adjacent MIDAS site (ADMIDAS). This domain is also part of the ligand-binding site.</text>
</comment>
<comment type="PTM">
    <text evidence="3">Both Ser-745 and Ser-756 become phosphorylated when T-cells are exposed to phorbol esters. Phosphorylation on Thr-758 (but not on Ser-756) allows interaction with 14-3-3 proteins.</text>
</comment>
<comment type="disease">
    <text evidence="6">Defects in ITGB2 are the cause of leukocyte adhesion deficiency (LAD). The mutation causing LAD (Gly-128) is prevalent among Holstein cattle throughout the world, placing this disorder among the most common genetic diseases known in animal agriculture. All cattle with the mutant allele are related to one bull, who through the use of artificial insemination sired many calves in the 1950s and 1960s.</text>
</comment>
<comment type="similarity">
    <text evidence="7">Belongs to the integrin beta chain family.</text>
</comment>
<evidence type="ECO:0000250" key="1"/>
<evidence type="ECO:0000250" key="2">
    <source>
        <dbReference type="UniProtKB" id="P05106"/>
    </source>
</evidence>
<evidence type="ECO:0000250" key="3">
    <source>
        <dbReference type="UniProtKB" id="P05107"/>
    </source>
</evidence>
<evidence type="ECO:0000255" key="4"/>
<evidence type="ECO:0000255" key="5">
    <source>
        <dbReference type="PROSITE-ProRule" id="PRU01392"/>
    </source>
</evidence>
<evidence type="ECO:0000269" key="6">
    <source>
    </source>
</evidence>
<evidence type="ECO:0000305" key="7"/>
<sequence>MLRQRPQLLLLAGLLALQSVLSQECTNYKVSTCRDCIESGPGCAWCQKLNFTGQGEPDSIRCDTRAELLSKGCPADDIMEPKSLAETRDSQAGSRKQLSPQEVTLYLRPGQAVAFNVTFRRAKGYPIDLYYLMDLSYSMVDDLVNVKKLGGDLLRALNGITESGRIGFGSFVDKTVLPFVNTHPEKLRNPCPNKEKECQPPFAFRHVLKLTDNSKQFETEVGKQLISGNLDAPEGGLDAMMQVAACPEEIGWRNVTRLLVFATDDGFHFAGDGKLGAILTPNDGRCHLEDNLYKSSNEFDYPSVGQLAHKLAESNIQPIFAVTKKMVKTYEKLTEIIPKSAVGELSEDSRNVVELIKNAYNKLSSRVFLDHSTLPDTLKVTYDSFCSNGKSQVDQPRGDCDGVQINVPITFQVKVTATECIQQQSFTIRALGFTDTVTVRVLPQCECQCRDASRDGSICGGRGSMECGVCRCDAGYIGKNCECQTQGRSSQELEGSCRKDNSSIICSGLGDCICGQCVCHTSDVPNKKIYGQFCECDNVNCERYDGQVCGGEKRGLCFCGTCRCDEQYEGSACQCLKSTQGCLNLDGVECSGRGRCRCNVCQCDPGYQPPLCSECPGCPVPCAGFAPCTECLKFDKGPFAKNCSAACGQTKLLSSPVPGRKCKERDSEGCWMTYTLVQRDGRDRYDVHVDDMLECVKGPNIAAIVGGTVGGVVLVGILLLVIWKALTHLSDLREYHRFEKEKLKSQWNNDNPLFKSATTTVMNPKFAES</sequence>
<keyword id="KW-0106">Calcium</keyword>
<keyword id="KW-0130">Cell adhesion</keyword>
<keyword id="KW-1003">Cell membrane</keyword>
<keyword id="KW-0225">Disease variant</keyword>
<keyword id="KW-1015">Disulfide bond</keyword>
<keyword id="KW-0245">EGF-like domain</keyword>
<keyword id="KW-0325">Glycoprotein</keyword>
<keyword id="KW-0401">Integrin</keyword>
<keyword id="KW-0460">Magnesium</keyword>
<keyword id="KW-0472">Membrane</keyword>
<keyword id="KW-0479">Metal-binding</keyword>
<keyword id="KW-0581">Phagocytosis</keyword>
<keyword id="KW-0597">Phosphoprotein</keyword>
<keyword id="KW-0873">Pyrrolidone carboxylic acid</keyword>
<keyword id="KW-0675">Receptor</keyword>
<keyword id="KW-1185">Reference proteome</keyword>
<keyword id="KW-0677">Repeat</keyword>
<keyword id="KW-0732">Signal</keyword>
<keyword id="KW-0812">Transmembrane</keyword>
<keyword id="KW-1133">Transmembrane helix</keyword>
<proteinExistence type="evidence at protein level"/>
<dbReference type="EMBL" id="M81233">
    <property type="protein sequence ID" value="AAA30438.1"/>
    <property type="molecule type" value="mRNA"/>
</dbReference>
<dbReference type="PIR" id="JC1121">
    <property type="entry name" value="JC1121"/>
</dbReference>
<dbReference type="RefSeq" id="NP_786975.1">
    <property type="nucleotide sequence ID" value="NM_175781.1"/>
</dbReference>
<dbReference type="RefSeq" id="XP_015329203.1">
    <property type="nucleotide sequence ID" value="XM_015473717.1"/>
</dbReference>
<dbReference type="RefSeq" id="XP_059742531.1">
    <property type="nucleotide sequence ID" value="XM_059886548.1"/>
</dbReference>
<dbReference type="SMR" id="P32592"/>
<dbReference type="FunCoup" id="P32592">
    <property type="interactions" value="1632"/>
</dbReference>
<dbReference type="IntAct" id="P32592">
    <property type="interactions" value="1"/>
</dbReference>
<dbReference type="STRING" id="9913.ENSBTAP00000059292"/>
<dbReference type="GlyCosmos" id="P32592">
    <property type="glycosylation" value="5 sites, No reported glycans"/>
</dbReference>
<dbReference type="GlyGen" id="P32592">
    <property type="glycosylation" value="5 sites"/>
</dbReference>
<dbReference type="PaxDb" id="9913-ENSBTAP00000022687"/>
<dbReference type="PeptideAtlas" id="P32592"/>
<dbReference type="Ensembl" id="ENSBTAT00000076413.2">
    <property type="protein sequence ID" value="ENSBTAP00000069668.1"/>
    <property type="gene ID" value="ENSBTAG00000017060.7"/>
</dbReference>
<dbReference type="GeneID" id="281877"/>
<dbReference type="KEGG" id="bta:281877"/>
<dbReference type="CTD" id="3689"/>
<dbReference type="VEuPathDB" id="HostDB:ENSBTAG00000017060"/>
<dbReference type="VGNC" id="VGNC:30327">
    <property type="gene designation" value="ITGB2"/>
</dbReference>
<dbReference type="eggNOG" id="KOG1226">
    <property type="taxonomic scope" value="Eukaryota"/>
</dbReference>
<dbReference type="GeneTree" id="ENSGT01130000278313"/>
<dbReference type="HOGENOM" id="CLU_011772_2_1_1"/>
<dbReference type="InParanoid" id="P32592"/>
<dbReference type="OrthoDB" id="410592at2759"/>
<dbReference type="TreeFam" id="TF105392"/>
<dbReference type="Reactome" id="R-BTA-166016">
    <property type="pathway name" value="Toll Like Receptor 4 (TLR4) Cascade"/>
</dbReference>
<dbReference type="Reactome" id="R-BTA-198933">
    <property type="pathway name" value="Immunoregulatory interactions between a Lymphoid and a non-Lymphoid cell"/>
</dbReference>
<dbReference type="Reactome" id="R-BTA-202733">
    <property type="pathway name" value="Cell surface interactions at the vascular wall"/>
</dbReference>
<dbReference type="Reactome" id="R-BTA-216083">
    <property type="pathway name" value="Integrin cell surface interactions"/>
</dbReference>
<dbReference type="Reactome" id="R-BTA-6798695">
    <property type="pathway name" value="Neutrophil degranulation"/>
</dbReference>
<dbReference type="Proteomes" id="UP000009136">
    <property type="component" value="Chromosome 1"/>
</dbReference>
<dbReference type="Bgee" id="ENSBTAG00000017060">
    <property type="expression patterns" value="Expressed in monocyte and 103 other cell types or tissues"/>
</dbReference>
<dbReference type="GO" id="GO:0009986">
    <property type="term" value="C:cell surface"/>
    <property type="evidence" value="ECO:0000318"/>
    <property type="project" value="GO_Central"/>
</dbReference>
<dbReference type="GO" id="GO:0005925">
    <property type="term" value="C:focal adhesion"/>
    <property type="evidence" value="ECO:0000318"/>
    <property type="project" value="GO_Central"/>
</dbReference>
<dbReference type="GO" id="GO:0008305">
    <property type="term" value="C:integrin complex"/>
    <property type="evidence" value="ECO:0000318"/>
    <property type="project" value="GO_Central"/>
</dbReference>
<dbReference type="GO" id="GO:0016020">
    <property type="term" value="C:membrane"/>
    <property type="evidence" value="ECO:0000250"/>
    <property type="project" value="UniProtKB"/>
</dbReference>
<dbReference type="GO" id="GO:0045121">
    <property type="term" value="C:membrane raft"/>
    <property type="evidence" value="ECO:0007669"/>
    <property type="project" value="UniProtKB-SubCell"/>
</dbReference>
<dbReference type="GO" id="GO:0001540">
    <property type="term" value="F:amyloid-beta binding"/>
    <property type="evidence" value="ECO:0000318"/>
    <property type="project" value="GO_Central"/>
</dbReference>
<dbReference type="GO" id="GO:0005178">
    <property type="term" value="F:integrin binding"/>
    <property type="evidence" value="ECO:0000318"/>
    <property type="project" value="GO_Central"/>
</dbReference>
<dbReference type="GO" id="GO:0046872">
    <property type="term" value="F:metal ion binding"/>
    <property type="evidence" value="ECO:0007669"/>
    <property type="project" value="UniProtKB-KW"/>
</dbReference>
<dbReference type="GO" id="GO:0019901">
    <property type="term" value="F:protein kinase binding"/>
    <property type="evidence" value="ECO:0000318"/>
    <property type="project" value="GO_Central"/>
</dbReference>
<dbReference type="GO" id="GO:0033627">
    <property type="term" value="P:cell adhesion mediated by integrin"/>
    <property type="evidence" value="ECO:0000318"/>
    <property type="project" value="GO_Central"/>
</dbReference>
<dbReference type="GO" id="GO:0007160">
    <property type="term" value="P:cell-matrix adhesion"/>
    <property type="evidence" value="ECO:0000318"/>
    <property type="project" value="GO_Central"/>
</dbReference>
<dbReference type="GO" id="GO:0071404">
    <property type="term" value="P:cellular response to low-density lipoprotein particle stimulus"/>
    <property type="evidence" value="ECO:0000250"/>
    <property type="project" value="UniProtKB"/>
</dbReference>
<dbReference type="GO" id="GO:0007229">
    <property type="term" value="P:integrin-mediated signaling pathway"/>
    <property type="evidence" value="ECO:0000318"/>
    <property type="project" value="GO_Central"/>
</dbReference>
<dbReference type="GO" id="GO:0007159">
    <property type="term" value="P:leukocyte cell-cell adhesion"/>
    <property type="evidence" value="ECO:0000318"/>
    <property type="project" value="GO_Central"/>
</dbReference>
<dbReference type="GO" id="GO:0030593">
    <property type="term" value="P:neutrophil chemotaxis"/>
    <property type="evidence" value="ECO:0000318"/>
    <property type="project" value="GO_Central"/>
</dbReference>
<dbReference type="GO" id="GO:0006909">
    <property type="term" value="P:phagocytosis"/>
    <property type="evidence" value="ECO:0007669"/>
    <property type="project" value="UniProtKB-KW"/>
</dbReference>
<dbReference type="GO" id="GO:1904996">
    <property type="term" value="P:positive regulation of leukocyte adhesion to vascular endothelial cell"/>
    <property type="evidence" value="ECO:0000250"/>
    <property type="project" value="UniProtKB"/>
</dbReference>
<dbReference type="GO" id="GO:0031623">
    <property type="term" value="P:receptor internalization"/>
    <property type="evidence" value="ECO:0000250"/>
    <property type="project" value="UniProtKB"/>
</dbReference>
<dbReference type="FunFam" id="1.20.5.100:FF:000008">
    <property type="entry name" value="Integrin beta"/>
    <property type="match status" value="1"/>
</dbReference>
<dbReference type="FunFam" id="2.10.25.10:FF:000076">
    <property type="entry name" value="Integrin beta"/>
    <property type="match status" value="1"/>
</dbReference>
<dbReference type="FunFam" id="2.10.25.10:FF:000098">
    <property type="entry name" value="Integrin beta"/>
    <property type="match status" value="1"/>
</dbReference>
<dbReference type="FunFam" id="2.10.25.10:FF:000442">
    <property type="entry name" value="Integrin beta"/>
    <property type="match status" value="1"/>
</dbReference>
<dbReference type="FunFam" id="2.60.40.1510:FF:000008">
    <property type="entry name" value="Integrin beta"/>
    <property type="match status" value="1"/>
</dbReference>
<dbReference type="FunFam" id="3.30.1680.10:FF:000012">
    <property type="entry name" value="Integrin beta"/>
    <property type="match status" value="1"/>
</dbReference>
<dbReference type="FunFam" id="3.40.50.410:FF:000002">
    <property type="entry name" value="Integrin beta"/>
    <property type="match status" value="1"/>
</dbReference>
<dbReference type="Gene3D" id="6.20.50.10">
    <property type="match status" value="1"/>
</dbReference>
<dbReference type="Gene3D" id="1.20.5.100">
    <property type="entry name" value="Cytochrome c1, transmembrane anchor, C-terminal"/>
    <property type="match status" value="1"/>
</dbReference>
<dbReference type="Gene3D" id="2.10.25.10">
    <property type="entry name" value="Laminin"/>
    <property type="match status" value="4"/>
</dbReference>
<dbReference type="Gene3D" id="3.30.1680.10">
    <property type="entry name" value="ligand-binding face of the semaphorins, domain 2"/>
    <property type="match status" value="1"/>
</dbReference>
<dbReference type="Gene3D" id="2.60.40.1510">
    <property type="entry name" value="ntegrin, alpha v. Chain A, domain 3"/>
    <property type="match status" value="1"/>
</dbReference>
<dbReference type="Gene3D" id="3.40.50.410">
    <property type="entry name" value="von Willebrand factor, type A domain"/>
    <property type="match status" value="1"/>
</dbReference>
<dbReference type="InterPro" id="IPR013111">
    <property type="entry name" value="EGF_extracell"/>
</dbReference>
<dbReference type="InterPro" id="IPR015439">
    <property type="entry name" value="Integrin_b-2_sf"/>
</dbReference>
<dbReference type="InterPro" id="IPR033760">
    <property type="entry name" value="Integrin_beta_N"/>
</dbReference>
<dbReference type="InterPro" id="IPR015812">
    <property type="entry name" value="Integrin_bsu"/>
</dbReference>
<dbReference type="InterPro" id="IPR014836">
    <property type="entry name" value="Integrin_bsu_cyt_dom"/>
</dbReference>
<dbReference type="InterPro" id="IPR012896">
    <property type="entry name" value="Integrin_bsu_tail"/>
</dbReference>
<dbReference type="InterPro" id="IPR036349">
    <property type="entry name" value="Integrin_bsu_tail_dom_sf"/>
</dbReference>
<dbReference type="InterPro" id="IPR002369">
    <property type="entry name" value="Integrin_bsu_VWA"/>
</dbReference>
<dbReference type="InterPro" id="IPR032695">
    <property type="entry name" value="Integrin_dom_sf"/>
</dbReference>
<dbReference type="InterPro" id="IPR016201">
    <property type="entry name" value="PSI"/>
</dbReference>
<dbReference type="InterPro" id="IPR036465">
    <property type="entry name" value="vWFA_dom_sf"/>
</dbReference>
<dbReference type="PANTHER" id="PTHR10082">
    <property type="entry name" value="INTEGRIN BETA SUBUNIT"/>
    <property type="match status" value="1"/>
</dbReference>
<dbReference type="PANTHER" id="PTHR10082:SF15">
    <property type="entry name" value="INTEGRIN BETA-2"/>
    <property type="match status" value="1"/>
</dbReference>
<dbReference type="Pfam" id="PF07974">
    <property type="entry name" value="EGF_2"/>
    <property type="match status" value="1"/>
</dbReference>
<dbReference type="Pfam" id="PF23105">
    <property type="entry name" value="EGF_integrin"/>
    <property type="match status" value="1"/>
</dbReference>
<dbReference type="Pfam" id="PF08725">
    <property type="entry name" value="Integrin_b_cyt"/>
    <property type="match status" value="1"/>
</dbReference>
<dbReference type="Pfam" id="PF07965">
    <property type="entry name" value="Integrin_B_tail"/>
    <property type="match status" value="1"/>
</dbReference>
<dbReference type="Pfam" id="PF00362">
    <property type="entry name" value="Integrin_beta"/>
    <property type="match status" value="1"/>
</dbReference>
<dbReference type="Pfam" id="PF17205">
    <property type="entry name" value="PSI_integrin"/>
    <property type="match status" value="1"/>
</dbReference>
<dbReference type="PIRSF" id="PIRSF002512">
    <property type="entry name" value="Integrin_B"/>
    <property type="match status" value="1"/>
</dbReference>
<dbReference type="PRINTS" id="PR01186">
    <property type="entry name" value="INTEGRINB"/>
</dbReference>
<dbReference type="SMART" id="SM00187">
    <property type="entry name" value="INB"/>
    <property type="match status" value="1"/>
</dbReference>
<dbReference type="SMART" id="SM01241">
    <property type="entry name" value="Integrin_b_cyt"/>
    <property type="match status" value="1"/>
</dbReference>
<dbReference type="SMART" id="SM01242">
    <property type="entry name" value="Integrin_B_tail"/>
    <property type="match status" value="1"/>
</dbReference>
<dbReference type="SMART" id="SM00423">
    <property type="entry name" value="PSI"/>
    <property type="match status" value="1"/>
</dbReference>
<dbReference type="SUPFAM" id="SSF57196">
    <property type="entry name" value="EGF/Laminin"/>
    <property type="match status" value="2"/>
</dbReference>
<dbReference type="SUPFAM" id="SSF69687">
    <property type="entry name" value="Integrin beta tail domain"/>
    <property type="match status" value="1"/>
</dbReference>
<dbReference type="SUPFAM" id="SSF69179">
    <property type="entry name" value="Integrin domains"/>
    <property type="match status" value="1"/>
</dbReference>
<dbReference type="SUPFAM" id="SSF103575">
    <property type="entry name" value="Plexin repeat"/>
    <property type="match status" value="1"/>
</dbReference>
<dbReference type="SUPFAM" id="SSF53300">
    <property type="entry name" value="vWA-like"/>
    <property type="match status" value="1"/>
</dbReference>
<dbReference type="PROSITE" id="PS00022">
    <property type="entry name" value="EGF_1"/>
    <property type="match status" value="2"/>
</dbReference>
<dbReference type="PROSITE" id="PS01186">
    <property type="entry name" value="EGF_2"/>
    <property type="match status" value="2"/>
</dbReference>
<dbReference type="PROSITE" id="PS00243">
    <property type="entry name" value="I_EGF_1"/>
    <property type="match status" value="3"/>
</dbReference>
<dbReference type="PROSITE" id="PS52047">
    <property type="entry name" value="I_EGF_2"/>
    <property type="match status" value="4"/>
</dbReference>
<accession>P32592</accession>